<gene>
    <name type="primary">sspP</name>
    <name type="synonym">cotL</name>
    <name type="ordered locus">BSU17980</name>
</gene>
<reference key="1">
    <citation type="journal article" date="1997" name="J. Bacteriol.">
        <title>CotM of Bacillus subtilis, a member of the alpha-crystallin family of stress proteins, is induced during development and participates in spore outer coat formation.</title>
        <authorList>
            <person name="Henriques A.O."/>
            <person name="Beall B.W."/>
            <person name="Moran C.P. Jr."/>
        </authorList>
    </citation>
    <scope>NUCLEOTIDE SEQUENCE [GENOMIC DNA]</scope>
    <source>
        <strain>168</strain>
    </source>
</reference>
<reference key="2">
    <citation type="journal article" date="1997" name="Nature">
        <title>The complete genome sequence of the Gram-positive bacterium Bacillus subtilis.</title>
        <authorList>
            <person name="Kunst F."/>
            <person name="Ogasawara N."/>
            <person name="Moszer I."/>
            <person name="Albertini A.M."/>
            <person name="Alloni G."/>
            <person name="Azevedo V."/>
            <person name="Bertero M.G."/>
            <person name="Bessieres P."/>
            <person name="Bolotin A."/>
            <person name="Borchert S."/>
            <person name="Borriss R."/>
            <person name="Boursier L."/>
            <person name="Brans A."/>
            <person name="Braun M."/>
            <person name="Brignell S.C."/>
            <person name="Bron S."/>
            <person name="Brouillet S."/>
            <person name="Bruschi C.V."/>
            <person name="Caldwell B."/>
            <person name="Capuano V."/>
            <person name="Carter N.M."/>
            <person name="Choi S.-K."/>
            <person name="Codani J.-J."/>
            <person name="Connerton I.F."/>
            <person name="Cummings N.J."/>
            <person name="Daniel R.A."/>
            <person name="Denizot F."/>
            <person name="Devine K.M."/>
            <person name="Duesterhoeft A."/>
            <person name="Ehrlich S.D."/>
            <person name="Emmerson P.T."/>
            <person name="Entian K.-D."/>
            <person name="Errington J."/>
            <person name="Fabret C."/>
            <person name="Ferrari E."/>
            <person name="Foulger D."/>
            <person name="Fritz C."/>
            <person name="Fujita M."/>
            <person name="Fujita Y."/>
            <person name="Fuma S."/>
            <person name="Galizzi A."/>
            <person name="Galleron N."/>
            <person name="Ghim S.-Y."/>
            <person name="Glaser P."/>
            <person name="Goffeau A."/>
            <person name="Golightly E.J."/>
            <person name="Grandi G."/>
            <person name="Guiseppi G."/>
            <person name="Guy B.J."/>
            <person name="Haga K."/>
            <person name="Haiech J."/>
            <person name="Harwood C.R."/>
            <person name="Henaut A."/>
            <person name="Hilbert H."/>
            <person name="Holsappel S."/>
            <person name="Hosono S."/>
            <person name="Hullo M.-F."/>
            <person name="Itaya M."/>
            <person name="Jones L.-M."/>
            <person name="Joris B."/>
            <person name="Karamata D."/>
            <person name="Kasahara Y."/>
            <person name="Klaerr-Blanchard M."/>
            <person name="Klein C."/>
            <person name="Kobayashi Y."/>
            <person name="Koetter P."/>
            <person name="Koningstein G."/>
            <person name="Krogh S."/>
            <person name="Kumano M."/>
            <person name="Kurita K."/>
            <person name="Lapidus A."/>
            <person name="Lardinois S."/>
            <person name="Lauber J."/>
            <person name="Lazarevic V."/>
            <person name="Lee S.-M."/>
            <person name="Levine A."/>
            <person name="Liu H."/>
            <person name="Masuda S."/>
            <person name="Mauel C."/>
            <person name="Medigue C."/>
            <person name="Medina N."/>
            <person name="Mellado R.P."/>
            <person name="Mizuno M."/>
            <person name="Moestl D."/>
            <person name="Nakai S."/>
            <person name="Noback M."/>
            <person name="Noone D."/>
            <person name="O'Reilly M."/>
            <person name="Ogawa K."/>
            <person name="Ogiwara A."/>
            <person name="Oudega B."/>
            <person name="Park S.-H."/>
            <person name="Parro V."/>
            <person name="Pohl T.M."/>
            <person name="Portetelle D."/>
            <person name="Porwollik S."/>
            <person name="Prescott A.M."/>
            <person name="Presecan E."/>
            <person name="Pujic P."/>
            <person name="Purnelle B."/>
            <person name="Rapoport G."/>
            <person name="Rey M."/>
            <person name="Reynolds S."/>
            <person name="Rieger M."/>
            <person name="Rivolta C."/>
            <person name="Rocha E."/>
            <person name="Roche B."/>
            <person name="Rose M."/>
            <person name="Sadaie Y."/>
            <person name="Sato T."/>
            <person name="Scanlan E."/>
            <person name="Schleich S."/>
            <person name="Schroeter R."/>
            <person name="Scoffone F."/>
            <person name="Sekiguchi J."/>
            <person name="Sekowska A."/>
            <person name="Seror S.J."/>
            <person name="Serror P."/>
            <person name="Shin B.-S."/>
            <person name="Soldo B."/>
            <person name="Sorokin A."/>
            <person name="Tacconi E."/>
            <person name="Takagi T."/>
            <person name="Takahashi H."/>
            <person name="Takemaru K."/>
            <person name="Takeuchi M."/>
            <person name="Tamakoshi A."/>
            <person name="Tanaka T."/>
            <person name="Terpstra P."/>
            <person name="Tognoni A."/>
            <person name="Tosato V."/>
            <person name="Uchiyama S."/>
            <person name="Vandenbol M."/>
            <person name="Vannier F."/>
            <person name="Vassarotti A."/>
            <person name="Viari A."/>
            <person name="Wambutt R."/>
            <person name="Wedler E."/>
            <person name="Wedler H."/>
            <person name="Weitzenegger T."/>
            <person name="Winters P."/>
            <person name="Wipat A."/>
            <person name="Yamamoto H."/>
            <person name="Yamane K."/>
            <person name="Yasumoto K."/>
            <person name="Yata K."/>
            <person name="Yoshida K."/>
            <person name="Yoshikawa H.-F."/>
            <person name="Zumstein E."/>
            <person name="Yoshikawa H."/>
            <person name="Danchin A."/>
        </authorList>
    </citation>
    <scope>NUCLEOTIDE SEQUENCE [LARGE SCALE GENOMIC DNA]</scope>
    <source>
        <strain>168</strain>
    </source>
</reference>
<reference key="3">
    <citation type="journal article" date="2000" name="Gene">
        <title>Analysis of the regulation and function of five genes encoding small, acid-soluble spore proteins of Bacillus subtilis.</title>
        <authorList>
            <person name="Cabrera-Hernandez A."/>
            <person name="Setlow P."/>
        </authorList>
    </citation>
    <scope>SUBCELLULAR LOCATION</scope>
    <scope>INDUCTION</scope>
</reference>
<evidence type="ECO:0000256" key="1">
    <source>
        <dbReference type="SAM" id="MobiDB-lite"/>
    </source>
</evidence>
<evidence type="ECO:0000269" key="2">
    <source>
    </source>
</evidence>
<evidence type="ECO:0000305" key="3"/>
<evidence type="ECO:0000305" key="4">
    <source>
    </source>
</evidence>
<organism>
    <name type="scientific">Bacillus subtilis (strain 168)</name>
    <dbReference type="NCBI Taxonomy" id="224308"/>
    <lineage>
        <taxon>Bacteria</taxon>
        <taxon>Bacillati</taxon>
        <taxon>Bacillota</taxon>
        <taxon>Bacilli</taxon>
        <taxon>Bacillales</taxon>
        <taxon>Bacillaceae</taxon>
        <taxon>Bacillus</taxon>
    </lineage>
</organism>
<name>SSPP_BACSU</name>
<accession>P71032</accession>
<dbReference type="EMBL" id="U72073">
    <property type="protein sequence ID" value="AAC44988.1"/>
    <property type="molecule type" value="Genomic_DNA"/>
</dbReference>
<dbReference type="EMBL" id="AL009126">
    <property type="protein sequence ID" value="CAB13682.1"/>
    <property type="molecule type" value="Genomic_DNA"/>
</dbReference>
<dbReference type="PIR" id="B69606">
    <property type="entry name" value="B69606"/>
</dbReference>
<dbReference type="RefSeq" id="NP_389681.1">
    <property type="nucleotide sequence ID" value="NC_000964.3"/>
</dbReference>
<dbReference type="RefSeq" id="WP_003221237.1">
    <property type="nucleotide sequence ID" value="NZ_OZ025638.1"/>
</dbReference>
<dbReference type="FunCoup" id="P71032">
    <property type="interactions" value="44"/>
</dbReference>
<dbReference type="STRING" id="224308.BSU17980"/>
<dbReference type="PaxDb" id="224308-BSU17980"/>
<dbReference type="EnsemblBacteria" id="CAB13682">
    <property type="protein sequence ID" value="CAB13682"/>
    <property type="gene ID" value="BSU_17980"/>
</dbReference>
<dbReference type="GeneID" id="938192"/>
<dbReference type="KEGG" id="bsu:BSU17980"/>
<dbReference type="PATRIC" id="fig|224308.179.peg.1959"/>
<dbReference type="eggNOG" id="ENOG5032ZXB">
    <property type="taxonomic scope" value="Bacteria"/>
</dbReference>
<dbReference type="InParanoid" id="P71032"/>
<dbReference type="OrthoDB" id="2691914at2"/>
<dbReference type="BioCyc" id="BSUB:BSU17980-MONOMER"/>
<dbReference type="PRO" id="PR:P71032"/>
<dbReference type="Proteomes" id="UP000001570">
    <property type="component" value="Chromosome"/>
</dbReference>
<dbReference type="GO" id="GO:0030436">
    <property type="term" value="P:asexual sporulation"/>
    <property type="evidence" value="ECO:0007669"/>
    <property type="project" value="UniProtKB-UniRule"/>
</dbReference>
<dbReference type="GO" id="GO:0030435">
    <property type="term" value="P:sporulation resulting in formation of a cellular spore"/>
    <property type="evidence" value="ECO:0007669"/>
    <property type="project" value="UniProtKB-KW"/>
</dbReference>
<dbReference type="HAMAP" id="MF_00666">
    <property type="entry name" value="SspP"/>
    <property type="match status" value="1"/>
</dbReference>
<dbReference type="InterPro" id="IPR012614">
    <property type="entry name" value="SASP_SspP"/>
</dbReference>
<dbReference type="NCBIfam" id="NF006905">
    <property type="entry name" value="PRK09399.1"/>
    <property type="match status" value="1"/>
</dbReference>
<dbReference type="Pfam" id="PF08179">
    <property type="entry name" value="SspP"/>
    <property type="match status" value="1"/>
</dbReference>
<feature type="chain" id="PRO_0000217214" description="Small, acid-soluble spore protein P">
    <location>
        <begin position="1"/>
        <end position="48"/>
    </location>
</feature>
<feature type="region of interest" description="Disordered" evidence="1">
    <location>
        <begin position="1"/>
        <end position="48"/>
    </location>
</feature>
<feature type="compositionally biased region" description="Basic and acidic residues" evidence="1">
    <location>
        <begin position="1"/>
        <end position="12"/>
    </location>
</feature>
<feature type="compositionally biased region" description="Basic residues" evidence="1">
    <location>
        <begin position="30"/>
        <end position="48"/>
    </location>
</feature>
<proteinExistence type="evidence at transcript level"/>
<protein>
    <recommendedName>
        <fullName>Small, acid-soluble spore protein P</fullName>
        <shortName>SASP P</shortName>
    </recommendedName>
</protein>
<comment type="subcellular location">
    <subcellularLocation>
        <location evidence="2">Spore core</location>
    </subcellularLocation>
</comment>
<comment type="induction">
    <text evidence="2">Expressed only in the forespore compartment of sporulating cells. Expression is sigma G-dependent.</text>
</comment>
<comment type="similarity">
    <text evidence="3">Belongs to the SspP family.</text>
</comment>
<comment type="caution">
    <text evidence="4">Was originally thought to be a spore coat protein.</text>
</comment>
<keyword id="KW-1185">Reference proteome</keyword>
<keyword id="KW-0749">Sporulation</keyword>
<sequence length="48" mass="5431">MTNKNTSKDMHKNAPKGHNPGQPEPLSGSKKVKNRNHTRQKHNSSHDM</sequence>